<sequence>MTTQLEQAWELAKQRFAAVGIDVEEALRQLDRLPVSMHCWQGDDVAGFENPEGSLTGGIQSTGNYPGKARNATELRADLEQALRLIPGPKRLNLHAIYLESDTPVARDQIKPEHFKNWVEWAKANRLGLDFNPTCFSHPLSADGFTLSHPDAKIRQFWIDHCKASRRVSAYFGEQLGTPSVMNIWIPDGMKDITVDRLAPRQRLLEALDEVISEKFDPAHHIDAVESKLFGIGAESYTVGSNEFYMGYATSRQTALCLDAGHFHPTEVISDKISAAMLYVPRLLLHVSRPVRWDSDHVVLLDDETQAIASEIVRHNLFDRVHIGLDFFDASINRVAAWVIGTRNMKKALLRALLEPTDQLRQLEASGDYTARLALLEEQKSLPWQAVWEMYCQRHDTPTGSQWLDSVRTYEKEILSKRS</sequence>
<comment type="function">
    <text evidence="1">Catalyzes the interconversion of L-rhamnose and L-rhamnulose.</text>
</comment>
<comment type="catalytic activity">
    <reaction evidence="1">
        <text>L-rhamnopyranose = L-rhamnulose</text>
        <dbReference type="Rhea" id="RHEA:23160"/>
        <dbReference type="ChEBI" id="CHEBI:17897"/>
        <dbReference type="ChEBI" id="CHEBI:62346"/>
        <dbReference type="EC" id="5.3.1.14"/>
    </reaction>
</comment>
<comment type="cofactor">
    <cofactor evidence="1">
        <name>Mn(2+)</name>
        <dbReference type="ChEBI" id="CHEBI:29035"/>
    </cofactor>
    <text evidence="1">Binds 1 Mn(2+) ion per subunit.</text>
</comment>
<comment type="pathway">
    <text evidence="1">Carbohydrate degradation; L-rhamnose degradation; glycerone phosphate from L-rhamnose: step 1/3.</text>
</comment>
<comment type="subunit">
    <text evidence="1">Homotetramer.</text>
</comment>
<comment type="subcellular location">
    <subcellularLocation>
        <location evidence="1">Cytoplasm</location>
    </subcellularLocation>
</comment>
<comment type="similarity">
    <text evidence="1">Belongs to the rhamnose isomerase family.</text>
</comment>
<accession>B4TPQ7</accession>
<feature type="chain" id="PRO_1000128893" description="L-rhamnose isomerase">
    <location>
        <begin position="1"/>
        <end position="419"/>
    </location>
</feature>
<feature type="binding site" evidence="1">
    <location>
        <position position="262"/>
    </location>
    <ligand>
        <name>Mn(2+)</name>
        <dbReference type="ChEBI" id="CHEBI:29035"/>
    </ligand>
</feature>
<feature type="binding site" evidence="1">
    <location>
        <position position="294"/>
    </location>
    <ligand>
        <name>Mn(2+)</name>
        <dbReference type="ChEBI" id="CHEBI:29035"/>
    </ligand>
</feature>
<feature type="binding site" evidence="1">
    <location>
        <position position="296"/>
    </location>
    <ligand>
        <name>Mn(2+)</name>
        <dbReference type="ChEBI" id="CHEBI:29035"/>
    </ligand>
</feature>
<protein>
    <recommendedName>
        <fullName evidence="1">L-rhamnose isomerase</fullName>
        <ecNumber evidence="1">5.3.1.14</ecNumber>
    </recommendedName>
</protein>
<gene>
    <name evidence="1" type="primary">rhaA</name>
    <name type="ordered locus">SeSA_A4260</name>
</gene>
<organism>
    <name type="scientific">Salmonella schwarzengrund (strain CVM19633)</name>
    <dbReference type="NCBI Taxonomy" id="439843"/>
    <lineage>
        <taxon>Bacteria</taxon>
        <taxon>Pseudomonadati</taxon>
        <taxon>Pseudomonadota</taxon>
        <taxon>Gammaproteobacteria</taxon>
        <taxon>Enterobacterales</taxon>
        <taxon>Enterobacteriaceae</taxon>
        <taxon>Salmonella</taxon>
    </lineage>
</organism>
<keyword id="KW-0963">Cytoplasm</keyword>
<keyword id="KW-0413">Isomerase</keyword>
<keyword id="KW-0464">Manganese</keyword>
<keyword id="KW-0479">Metal-binding</keyword>
<keyword id="KW-0684">Rhamnose metabolism</keyword>
<dbReference type="EC" id="5.3.1.14" evidence="1"/>
<dbReference type="EMBL" id="CP001127">
    <property type="protein sequence ID" value="ACF90299.1"/>
    <property type="molecule type" value="Genomic_DNA"/>
</dbReference>
<dbReference type="RefSeq" id="WP_000211472.1">
    <property type="nucleotide sequence ID" value="NC_011094.1"/>
</dbReference>
<dbReference type="SMR" id="B4TPQ7"/>
<dbReference type="KEGG" id="sew:SeSA_A4260"/>
<dbReference type="HOGENOM" id="CLU_052790_0_0_6"/>
<dbReference type="UniPathway" id="UPA00541">
    <property type="reaction ID" value="UER00601"/>
</dbReference>
<dbReference type="Proteomes" id="UP000001865">
    <property type="component" value="Chromosome"/>
</dbReference>
<dbReference type="GO" id="GO:0005737">
    <property type="term" value="C:cytoplasm"/>
    <property type="evidence" value="ECO:0007669"/>
    <property type="project" value="UniProtKB-SubCell"/>
</dbReference>
<dbReference type="GO" id="GO:0008740">
    <property type="term" value="F:L-rhamnose isomerase activity"/>
    <property type="evidence" value="ECO:0007669"/>
    <property type="project" value="UniProtKB-UniRule"/>
</dbReference>
<dbReference type="GO" id="GO:0030145">
    <property type="term" value="F:manganese ion binding"/>
    <property type="evidence" value="ECO:0007669"/>
    <property type="project" value="UniProtKB-UniRule"/>
</dbReference>
<dbReference type="GO" id="GO:0019324">
    <property type="term" value="P:L-lyxose metabolic process"/>
    <property type="evidence" value="ECO:0007669"/>
    <property type="project" value="TreeGrafter"/>
</dbReference>
<dbReference type="GO" id="GO:0019301">
    <property type="term" value="P:rhamnose catabolic process"/>
    <property type="evidence" value="ECO:0007669"/>
    <property type="project" value="UniProtKB-UniRule"/>
</dbReference>
<dbReference type="FunFam" id="3.20.20.150:FF:000006">
    <property type="entry name" value="L-rhamnose isomerase"/>
    <property type="match status" value="1"/>
</dbReference>
<dbReference type="Gene3D" id="3.20.20.150">
    <property type="entry name" value="Divalent-metal-dependent TIM barrel enzymes"/>
    <property type="match status" value="1"/>
</dbReference>
<dbReference type="HAMAP" id="MF_00541">
    <property type="entry name" value="RhaA"/>
    <property type="match status" value="1"/>
</dbReference>
<dbReference type="InterPro" id="IPR050337">
    <property type="entry name" value="L-rhamnose_isomerase"/>
</dbReference>
<dbReference type="InterPro" id="IPR009308">
    <property type="entry name" value="Rhamnose_isomerase"/>
</dbReference>
<dbReference type="InterPro" id="IPR036237">
    <property type="entry name" value="Xyl_isomerase-like_sf"/>
</dbReference>
<dbReference type="NCBIfam" id="NF002203">
    <property type="entry name" value="PRK01076.1"/>
    <property type="match status" value="1"/>
</dbReference>
<dbReference type="NCBIfam" id="TIGR01748">
    <property type="entry name" value="rhaA"/>
    <property type="match status" value="1"/>
</dbReference>
<dbReference type="PANTHER" id="PTHR30268">
    <property type="entry name" value="L-RHAMNOSE ISOMERASE"/>
    <property type="match status" value="1"/>
</dbReference>
<dbReference type="PANTHER" id="PTHR30268:SF0">
    <property type="entry name" value="L-RHAMNOSE ISOMERASE"/>
    <property type="match status" value="1"/>
</dbReference>
<dbReference type="Pfam" id="PF06134">
    <property type="entry name" value="RhaA"/>
    <property type="match status" value="1"/>
</dbReference>
<dbReference type="SUPFAM" id="SSF51658">
    <property type="entry name" value="Xylose isomerase-like"/>
    <property type="match status" value="1"/>
</dbReference>
<proteinExistence type="inferred from homology"/>
<reference key="1">
    <citation type="journal article" date="2011" name="J. Bacteriol.">
        <title>Comparative genomics of 28 Salmonella enterica isolates: evidence for CRISPR-mediated adaptive sublineage evolution.</title>
        <authorList>
            <person name="Fricke W.F."/>
            <person name="Mammel M.K."/>
            <person name="McDermott P.F."/>
            <person name="Tartera C."/>
            <person name="White D.G."/>
            <person name="Leclerc J.E."/>
            <person name="Ravel J."/>
            <person name="Cebula T.A."/>
        </authorList>
    </citation>
    <scope>NUCLEOTIDE SEQUENCE [LARGE SCALE GENOMIC DNA]</scope>
    <source>
        <strain>CVM19633</strain>
    </source>
</reference>
<name>RHAA_SALSV</name>
<evidence type="ECO:0000255" key="1">
    <source>
        <dbReference type="HAMAP-Rule" id="MF_00541"/>
    </source>
</evidence>